<organism>
    <name type="scientific">Saccharophagus degradans (strain 2-40 / ATCC 43961 / DSM 17024)</name>
    <dbReference type="NCBI Taxonomy" id="203122"/>
    <lineage>
        <taxon>Bacteria</taxon>
        <taxon>Pseudomonadati</taxon>
        <taxon>Pseudomonadota</taxon>
        <taxon>Gammaproteobacteria</taxon>
        <taxon>Cellvibrionales</taxon>
        <taxon>Cellvibrionaceae</taxon>
        <taxon>Saccharophagus</taxon>
    </lineage>
</organism>
<keyword id="KW-0488">Methylation</keyword>
<keyword id="KW-1185">Reference proteome</keyword>
<keyword id="KW-0687">Ribonucleoprotein</keyword>
<keyword id="KW-0689">Ribosomal protein</keyword>
<keyword id="KW-0694">RNA-binding</keyword>
<keyword id="KW-0699">rRNA-binding</keyword>
<accession>Q21M97</accession>
<name>RL11_SACD2</name>
<gene>
    <name evidence="1" type="primary">rplK</name>
    <name type="ordered locus">Sde_0920</name>
</gene>
<proteinExistence type="inferred from homology"/>
<comment type="function">
    <text evidence="1">Forms part of the ribosomal stalk which helps the ribosome interact with GTP-bound translation factors.</text>
</comment>
<comment type="subunit">
    <text evidence="1">Part of the ribosomal stalk of the 50S ribosomal subunit. Interacts with L10 and the large rRNA to form the base of the stalk. L10 forms an elongated spine to which L12 dimers bind in a sequential fashion forming a multimeric L10(L12)X complex.</text>
</comment>
<comment type="PTM">
    <text evidence="1">One or more lysine residues are methylated.</text>
</comment>
<comment type="similarity">
    <text evidence="1">Belongs to the universal ribosomal protein uL11 family.</text>
</comment>
<evidence type="ECO:0000255" key="1">
    <source>
        <dbReference type="HAMAP-Rule" id="MF_00736"/>
    </source>
</evidence>
<evidence type="ECO:0000305" key="2"/>
<feature type="chain" id="PRO_0000258207" description="Large ribosomal subunit protein uL11">
    <location>
        <begin position="1"/>
        <end position="143"/>
    </location>
</feature>
<reference key="1">
    <citation type="journal article" date="2008" name="PLoS Genet.">
        <title>Complete genome sequence of the complex carbohydrate-degrading marine bacterium, Saccharophagus degradans strain 2-40 T.</title>
        <authorList>
            <person name="Weiner R.M."/>
            <person name="Taylor L.E. II"/>
            <person name="Henrissat B."/>
            <person name="Hauser L."/>
            <person name="Land M."/>
            <person name="Coutinho P.M."/>
            <person name="Rancurel C."/>
            <person name="Saunders E.H."/>
            <person name="Longmire A.G."/>
            <person name="Zhang H."/>
            <person name="Bayer E.A."/>
            <person name="Gilbert H.J."/>
            <person name="Larimer F."/>
            <person name="Zhulin I.B."/>
            <person name="Ekborg N.A."/>
            <person name="Lamed R."/>
            <person name="Richardson P.M."/>
            <person name="Borovok I."/>
            <person name="Hutcheson S."/>
        </authorList>
    </citation>
    <scope>NUCLEOTIDE SEQUENCE [LARGE SCALE GENOMIC DNA]</scope>
    <source>
        <strain>2-40 / ATCC 43961 / DSM 17024</strain>
    </source>
</reference>
<protein>
    <recommendedName>
        <fullName evidence="1">Large ribosomal subunit protein uL11</fullName>
    </recommendedName>
    <alternativeName>
        <fullName evidence="2">50S ribosomal protein L11</fullName>
    </alternativeName>
</protein>
<sequence length="143" mass="14912">MAKKVEAYIKLQVAAGKANPSPPVGPALGQKGVNIMEFCKAFNAQTQGMEPGSPVPVVISVYSDRSFTFTMKTPPASFLLKKAAGLKSGSARPNTQKVGKVTRAQLEEIATIKMADLTAGDMDAAVRTIAGSARAMGLETEGV</sequence>
<dbReference type="EMBL" id="CP000282">
    <property type="protein sequence ID" value="ABD80182.1"/>
    <property type="molecule type" value="Genomic_DNA"/>
</dbReference>
<dbReference type="RefSeq" id="WP_011467403.1">
    <property type="nucleotide sequence ID" value="NC_007912.1"/>
</dbReference>
<dbReference type="SMR" id="Q21M97"/>
<dbReference type="STRING" id="203122.Sde_0920"/>
<dbReference type="GeneID" id="98612606"/>
<dbReference type="KEGG" id="sde:Sde_0920"/>
<dbReference type="eggNOG" id="COG0080">
    <property type="taxonomic scope" value="Bacteria"/>
</dbReference>
<dbReference type="HOGENOM" id="CLU_074237_2_0_6"/>
<dbReference type="OrthoDB" id="9802408at2"/>
<dbReference type="Proteomes" id="UP000001947">
    <property type="component" value="Chromosome"/>
</dbReference>
<dbReference type="GO" id="GO:0022625">
    <property type="term" value="C:cytosolic large ribosomal subunit"/>
    <property type="evidence" value="ECO:0007669"/>
    <property type="project" value="TreeGrafter"/>
</dbReference>
<dbReference type="GO" id="GO:0070180">
    <property type="term" value="F:large ribosomal subunit rRNA binding"/>
    <property type="evidence" value="ECO:0007669"/>
    <property type="project" value="UniProtKB-UniRule"/>
</dbReference>
<dbReference type="GO" id="GO:0003735">
    <property type="term" value="F:structural constituent of ribosome"/>
    <property type="evidence" value="ECO:0007669"/>
    <property type="project" value="InterPro"/>
</dbReference>
<dbReference type="GO" id="GO:0006412">
    <property type="term" value="P:translation"/>
    <property type="evidence" value="ECO:0007669"/>
    <property type="project" value="UniProtKB-UniRule"/>
</dbReference>
<dbReference type="CDD" id="cd00349">
    <property type="entry name" value="Ribosomal_L11"/>
    <property type="match status" value="1"/>
</dbReference>
<dbReference type="FunFam" id="1.10.10.250:FF:000001">
    <property type="entry name" value="50S ribosomal protein L11"/>
    <property type="match status" value="1"/>
</dbReference>
<dbReference type="FunFam" id="3.30.1550.10:FF:000001">
    <property type="entry name" value="50S ribosomal protein L11"/>
    <property type="match status" value="1"/>
</dbReference>
<dbReference type="Gene3D" id="1.10.10.250">
    <property type="entry name" value="Ribosomal protein L11, C-terminal domain"/>
    <property type="match status" value="1"/>
</dbReference>
<dbReference type="Gene3D" id="3.30.1550.10">
    <property type="entry name" value="Ribosomal protein L11/L12, N-terminal domain"/>
    <property type="match status" value="1"/>
</dbReference>
<dbReference type="HAMAP" id="MF_00736">
    <property type="entry name" value="Ribosomal_uL11"/>
    <property type="match status" value="1"/>
</dbReference>
<dbReference type="InterPro" id="IPR000911">
    <property type="entry name" value="Ribosomal_uL11"/>
</dbReference>
<dbReference type="InterPro" id="IPR006519">
    <property type="entry name" value="Ribosomal_uL11_bac-typ"/>
</dbReference>
<dbReference type="InterPro" id="IPR020783">
    <property type="entry name" value="Ribosomal_uL11_C"/>
</dbReference>
<dbReference type="InterPro" id="IPR036769">
    <property type="entry name" value="Ribosomal_uL11_C_sf"/>
</dbReference>
<dbReference type="InterPro" id="IPR020784">
    <property type="entry name" value="Ribosomal_uL11_N"/>
</dbReference>
<dbReference type="InterPro" id="IPR036796">
    <property type="entry name" value="Ribosomal_uL11_N_sf"/>
</dbReference>
<dbReference type="NCBIfam" id="TIGR01632">
    <property type="entry name" value="L11_bact"/>
    <property type="match status" value="1"/>
</dbReference>
<dbReference type="PANTHER" id="PTHR11661">
    <property type="entry name" value="60S RIBOSOMAL PROTEIN L12"/>
    <property type="match status" value="1"/>
</dbReference>
<dbReference type="PANTHER" id="PTHR11661:SF1">
    <property type="entry name" value="LARGE RIBOSOMAL SUBUNIT PROTEIN UL11M"/>
    <property type="match status" value="1"/>
</dbReference>
<dbReference type="Pfam" id="PF00298">
    <property type="entry name" value="Ribosomal_L11"/>
    <property type="match status" value="1"/>
</dbReference>
<dbReference type="Pfam" id="PF03946">
    <property type="entry name" value="Ribosomal_L11_N"/>
    <property type="match status" value="1"/>
</dbReference>
<dbReference type="SMART" id="SM00649">
    <property type="entry name" value="RL11"/>
    <property type="match status" value="1"/>
</dbReference>
<dbReference type="SUPFAM" id="SSF54747">
    <property type="entry name" value="Ribosomal L11/L12e N-terminal domain"/>
    <property type="match status" value="1"/>
</dbReference>
<dbReference type="SUPFAM" id="SSF46906">
    <property type="entry name" value="Ribosomal protein L11, C-terminal domain"/>
    <property type="match status" value="1"/>
</dbReference>